<feature type="chain" id="PRO_0000324589" description="Methylcytosine dioxygenase TET2">
    <location>
        <begin position="1"/>
        <end position="1912"/>
    </location>
</feature>
<feature type="region of interest" description="Disordered" evidence="2">
    <location>
        <begin position="1"/>
        <end position="86"/>
    </location>
</feature>
<feature type="region of interest" description="Disordered" evidence="2">
    <location>
        <begin position="112"/>
        <end position="166"/>
    </location>
</feature>
<feature type="region of interest" description="Disordered" evidence="2">
    <location>
        <begin position="340"/>
        <end position="359"/>
    </location>
</feature>
<feature type="region of interest" description="Disordered" evidence="2">
    <location>
        <begin position="367"/>
        <end position="388"/>
    </location>
</feature>
<feature type="region of interest" description="Disordered" evidence="2">
    <location>
        <begin position="429"/>
        <end position="470"/>
    </location>
</feature>
<feature type="region of interest" description="Disordered" evidence="2">
    <location>
        <begin position="673"/>
        <end position="723"/>
    </location>
</feature>
<feature type="region of interest" description="Disordered" evidence="2">
    <location>
        <begin position="832"/>
        <end position="862"/>
    </location>
</feature>
<feature type="region of interest" description="Disordered" evidence="2">
    <location>
        <begin position="907"/>
        <end position="966"/>
    </location>
</feature>
<feature type="region of interest" description="Disordered" evidence="2">
    <location>
        <begin position="1009"/>
        <end position="1052"/>
    </location>
</feature>
<feature type="region of interest" description="Interaction with DNA" evidence="1">
    <location>
        <begin position="1203"/>
        <end position="1216"/>
    </location>
</feature>
<feature type="region of interest" description="Disordered" evidence="2">
    <location>
        <begin position="1379"/>
        <end position="1414"/>
    </location>
</feature>
<feature type="region of interest" description="Disordered" evidence="2">
    <location>
        <begin position="1444"/>
        <end position="1514"/>
    </location>
</feature>
<feature type="region of interest" description="Disordered" evidence="2">
    <location>
        <begin position="1842"/>
        <end position="1871"/>
    </location>
</feature>
<feature type="compositionally biased region" description="Basic and acidic residues" evidence="2">
    <location>
        <begin position="1"/>
        <end position="11"/>
    </location>
</feature>
<feature type="compositionally biased region" description="Polar residues" evidence="2">
    <location>
        <begin position="53"/>
        <end position="74"/>
    </location>
</feature>
<feature type="compositionally biased region" description="Polar residues" evidence="2">
    <location>
        <begin position="135"/>
        <end position="158"/>
    </location>
</feature>
<feature type="compositionally biased region" description="Polar residues" evidence="2">
    <location>
        <begin position="340"/>
        <end position="353"/>
    </location>
</feature>
<feature type="compositionally biased region" description="Polar residues" evidence="2">
    <location>
        <begin position="367"/>
        <end position="387"/>
    </location>
</feature>
<feature type="compositionally biased region" description="Polar residues" evidence="2">
    <location>
        <begin position="434"/>
        <end position="447"/>
    </location>
</feature>
<feature type="compositionally biased region" description="Polar residues" evidence="2">
    <location>
        <begin position="673"/>
        <end position="689"/>
    </location>
</feature>
<feature type="compositionally biased region" description="Low complexity" evidence="2">
    <location>
        <begin position="690"/>
        <end position="701"/>
    </location>
</feature>
<feature type="compositionally biased region" description="Polar residues" evidence="2">
    <location>
        <begin position="707"/>
        <end position="719"/>
    </location>
</feature>
<feature type="compositionally biased region" description="Polar residues" evidence="2">
    <location>
        <begin position="832"/>
        <end position="844"/>
    </location>
</feature>
<feature type="compositionally biased region" description="Low complexity" evidence="2">
    <location>
        <begin position="907"/>
        <end position="921"/>
    </location>
</feature>
<feature type="compositionally biased region" description="Polar residues" evidence="2">
    <location>
        <begin position="944"/>
        <end position="966"/>
    </location>
</feature>
<feature type="compositionally biased region" description="Polar residues" evidence="2">
    <location>
        <begin position="1036"/>
        <end position="1046"/>
    </location>
</feature>
<feature type="compositionally biased region" description="Basic residues" evidence="2">
    <location>
        <begin position="1387"/>
        <end position="1396"/>
    </location>
</feature>
<feature type="compositionally biased region" description="Pro residues" evidence="2">
    <location>
        <begin position="1456"/>
        <end position="1473"/>
    </location>
</feature>
<feature type="compositionally biased region" description="Polar residues" evidence="2">
    <location>
        <begin position="1480"/>
        <end position="1512"/>
    </location>
</feature>
<feature type="compositionally biased region" description="Basic and acidic residues" evidence="2">
    <location>
        <begin position="1842"/>
        <end position="1866"/>
    </location>
</feature>
<feature type="binding site" evidence="1">
    <location>
        <position position="1048"/>
    </location>
    <ligand>
        <name>Zn(2+)</name>
        <dbReference type="ChEBI" id="CHEBI:29105"/>
        <label>1</label>
    </ligand>
</feature>
<feature type="binding site" evidence="1">
    <location>
        <position position="1106"/>
    </location>
    <ligand>
        <name>Zn(2+)</name>
        <dbReference type="ChEBI" id="CHEBI:29105"/>
        <label>2</label>
    </ligand>
</feature>
<feature type="binding site" evidence="1">
    <location>
        <position position="1132"/>
    </location>
    <ligand>
        <name>Zn(2+)</name>
        <dbReference type="ChEBI" id="CHEBI:29105"/>
        <label>1</label>
    </ligand>
</feature>
<feature type="binding site" evidence="1">
    <location>
        <position position="1134"/>
    </location>
    <ligand>
        <name>Zn(2+)</name>
        <dbReference type="ChEBI" id="CHEBI:29105"/>
        <label>1</label>
    </ligand>
</feature>
<feature type="binding site" evidence="1">
    <location>
        <position position="1174"/>
    </location>
    <ligand>
        <name>2-oxoglutarate</name>
        <dbReference type="ChEBI" id="CHEBI:16810"/>
    </ligand>
</feature>
<feature type="binding site" evidence="1">
    <location>
        <position position="1184"/>
    </location>
    <ligand>
        <name>Zn(2+)</name>
        <dbReference type="ChEBI" id="CHEBI:29105"/>
        <label>2</label>
    </ligand>
</feature>
<feature type="binding site" evidence="1">
    <location>
        <position position="1186"/>
    </location>
    <ligand>
        <name>Zn(2+)</name>
        <dbReference type="ChEBI" id="CHEBI:29105"/>
        <label>2</label>
    </ligand>
</feature>
<feature type="binding site" evidence="1">
    <location>
        <position position="1202"/>
    </location>
    <ligand>
        <name>Zn(2+)</name>
        <dbReference type="ChEBI" id="CHEBI:29105"/>
        <label>3</label>
    </ligand>
</feature>
<feature type="binding site" evidence="1">
    <location>
        <position position="1211"/>
    </location>
    <ligand>
        <name>Zn(2+)</name>
        <dbReference type="ChEBI" id="CHEBI:29105"/>
        <label>3</label>
    </ligand>
</feature>
<feature type="binding site" evidence="1">
    <location>
        <position position="1271"/>
    </location>
    <ligand>
        <name>Zn(2+)</name>
        <dbReference type="ChEBI" id="CHEBI:29105"/>
        <label>3</label>
    </ligand>
</feature>
<feature type="binding site" evidence="1">
    <location>
        <position position="1287"/>
    </location>
    <ligand>
        <name>2-oxoglutarate</name>
        <dbReference type="ChEBI" id="CHEBI:16810"/>
    </ligand>
</feature>
<feature type="binding site" evidence="1">
    <location>
        <position position="1293"/>
    </location>
    <ligand>
        <name>Zn(2+)</name>
        <dbReference type="ChEBI" id="CHEBI:29105"/>
        <label>2</label>
    </ligand>
</feature>
<feature type="binding site" evidence="1">
    <location>
        <position position="1295"/>
    </location>
    <ligand>
        <name>Fe cation</name>
        <dbReference type="ChEBI" id="CHEBI:24875"/>
        <note>catalytic</note>
    </ligand>
</feature>
<feature type="binding site" evidence="1">
    <location>
        <position position="1297"/>
    </location>
    <ligand>
        <name>Fe cation</name>
        <dbReference type="ChEBI" id="CHEBI:24875"/>
        <note>catalytic</note>
    </ligand>
</feature>
<feature type="binding site" evidence="1">
    <location>
        <position position="1300"/>
    </location>
    <ligand>
        <name>substrate</name>
    </ligand>
</feature>
<feature type="binding site" evidence="1">
    <location>
        <position position="1329"/>
    </location>
    <ligand>
        <name>2-oxoglutarate</name>
        <dbReference type="ChEBI" id="CHEBI:16810"/>
    </ligand>
</feature>
<feature type="binding site" evidence="1">
    <location>
        <position position="1795"/>
    </location>
    <ligand>
        <name>Fe cation</name>
        <dbReference type="ChEBI" id="CHEBI:24875"/>
        <note>catalytic</note>
    </ligand>
</feature>
<feature type="binding site" evidence="1">
    <location>
        <begin position="1810"/>
        <end position="1812"/>
    </location>
    <ligand>
        <name>2-oxoglutarate</name>
        <dbReference type="ChEBI" id="CHEBI:16810"/>
    </ligand>
</feature>
<feature type="binding site" evidence="1">
    <location>
        <begin position="1816"/>
        <end position="1818"/>
    </location>
    <ligand>
        <name>substrate</name>
    </ligand>
</feature>
<feature type="binding site" evidence="1">
    <location>
        <position position="1826"/>
    </location>
    <ligand>
        <name>Zn(2+)</name>
        <dbReference type="ChEBI" id="CHEBI:29105"/>
        <label>3</label>
    </ligand>
</feature>
<feature type="modified residue" description="Phosphoserine" evidence="21">
    <location>
        <position position="15"/>
    </location>
</feature>
<feature type="modified residue" description="Phosphoserine" evidence="21">
    <location>
        <position position="23"/>
    </location>
</feature>
<feature type="modified residue" description="Phosphoserine" evidence="1">
    <location>
        <position position="76"/>
    </location>
</feature>
<feature type="modified residue" description="Phosphoserine" evidence="1">
    <location>
        <position position="97"/>
    </location>
</feature>
<feature type="modified residue" description="Phosphoserine" evidence="1">
    <location>
        <position position="1036"/>
    </location>
</feature>
<feature type="cross-link" description="Glycyl lysine isopeptide (Lys-Gly) (interchain with G-Cter in ubiquitin)" evidence="15">
    <location>
        <position position="1212"/>
    </location>
</feature>
<feature type="splice variant" id="VSP_032286" description="In isoform 3." evidence="16">
    <location>
        <begin position="1"/>
        <end position="1332"/>
    </location>
</feature>
<feature type="splice variant" id="VSP_032287" description="In isoform 2." evidence="17 18">
    <location>
        <begin position="1"/>
        <end position="1300"/>
    </location>
</feature>
<feature type="mutagenesis site" description="No effect on interaction with DCAF1, monoubiquitination, nor on 5-methylcytosine demethylase activity in vivo." evidence="15">
    <original>F</original>
    <variation>L</variation>
    <location>
        <position position="1200"/>
    </location>
</feature>
<feature type="mutagenesis site" description="Loss of 5-methylcytosine demethylase activity in vivo. No effect on interaction with DCAF1, nor on monoubiquitination." evidence="5">
    <original>W</original>
    <variation>R</variation>
    <location>
        <position position="1204"/>
    </location>
</feature>
<feature type="mutagenesis site" description="No effect on interaction with DCAF1, monoubiquitination, nor on 5-methylcytosine demethylase activity in vivo." evidence="15">
    <original>S</original>
    <variation>R</variation>
    <location>
        <position position="1205"/>
    </location>
</feature>
<feature type="mutagenesis site" description="Loss of monoubiquitination and of 5-methylcytosine demethylase activity in vivo. No effect on interaction with DCAF1." evidence="15">
    <original>C</original>
    <variation>Y</variation>
    <location>
        <position position="1211"/>
    </location>
</feature>
<feature type="mutagenesis site" description="Strongly reduces ubiquitination, loss of DNA-binding, loss of 5-methylcytosine demethylase activity in vivo. Does not affect nuclear localization, nor interaction with DCAF1." evidence="15">
    <original>K</original>
    <variation>E</variation>
    <location>
        <position position="1212"/>
    </location>
</feature>
<feature type="mutagenesis site" description="Strongly reduces ubiquitination, loss of DNA-binding, loss of 5-methylcytosine demethylase activity in vivo. Does not affect nuclear localization, nor interaction with DCAF1." evidence="15">
    <original>K</original>
    <variation>N</variation>
    <location>
        <position position="1212"/>
    </location>
</feature>
<feature type="mutagenesis site" description="Strongly reduces ubiquitination." evidence="15">
    <original>K</original>
    <variation>R</variation>
    <location>
        <position position="1212"/>
    </location>
</feature>
<feature type="mutagenesis site" description="Loss of interaction with DCAF1, monoubiquitination and of 5-methylcytosine demethylase activity in vivo." evidence="15">
    <original>F</original>
    <variation>S</variation>
    <location>
        <position position="1213"/>
    </location>
</feature>
<feature type="mutagenesis site" description="Loss of interaction with DCAF1, monoubiquitination and of 5-methylcytosine demethylase activity in vivo." evidence="15">
    <original>R</original>
    <variation>G</variation>
    <location>
        <position position="1215"/>
    </location>
</feature>
<feature type="mutagenesis site" description="No effect on interaction with DCAF1, monoubiquitination, nor on 5-methylcytosine demethylase activity in vivo." evidence="15">
    <original>E</original>
    <variation>G</variation>
    <location>
        <position position="1231"/>
    </location>
</feature>
<feature type="mutagenesis site" description="Impairs enzyme activity." evidence="5">
    <original>P</original>
    <variation>S</variation>
    <location>
        <position position="1280"/>
    </location>
</feature>
<feature type="mutagenesis site" description="Loss of enzyme activity, no effect on interaction with DCAF1; when associated with A-1297." evidence="4 7 9 15">
    <original>H</original>
    <variation>Y</variation>
    <location>
        <position position="1295"/>
    </location>
</feature>
<feature type="mutagenesis site" description="Loss of enzyme activity, no effect on interaction with DCAF1; when associated with Y-1295." evidence="4 7 9 15">
    <original>D</original>
    <variation>A</variation>
    <location>
        <position position="1297"/>
    </location>
</feature>
<feature type="mutagenesis site" description="Loss of enzyme activity." evidence="5">
    <original>H</original>
    <variation>R</variation>
    <variation>Q</variation>
    <location>
        <position position="1795"/>
    </location>
</feature>
<feature type="mutagenesis site" description="Impairs enzyme activity." evidence="5">
    <original>R</original>
    <variation>S</variation>
    <variation>M</variation>
    <location>
        <position position="1810"/>
    </location>
</feature>
<feature type="mutagenesis site" description="Impairs enzyme activity." evidence="5">
    <original>C</original>
    <variation>D</variation>
    <location>
        <position position="1827"/>
    </location>
</feature>
<feature type="sequence conflict" description="In Ref. 1; AAY90126." evidence="19" ref="1">
    <original>H</original>
    <variation>R</variation>
    <location>
        <position position="1225"/>
    </location>
</feature>
<feature type="sequence conflict" description="In Ref. 4; BAE32012/BAE31842." evidence="19" ref="4">
    <original>Q</original>
    <variation>R</variation>
    <location>
        <position position="1626"/>
    </location>
</feature>
<feature type="sequence conflict" description="In Ref. 4; BAE30334." evidence="19" ref="4">
    <original>L</original>
    <variation>V</variation>
    <location>
        <position position="1736"/>
    </location>
</feature>
<feature type="sequence conflict" description="In Ref. 4; BAE30334." evidence="19" ref="4">
    <original>T</original>
    <variation>A</variation>
    <location>
        <position position="1737"/>
    </location>
</feature>
<feature type="sequence conflict" description="In Ref. 4; BAE30334." evidence="19" ref="4">
    <original>K</original>
    <variation>E</variation>
    <location>
        <position position="1743"/>
    </location>
</feature>
<feature type="sequence conflict" description="In Ref. 4; BAE30334." evidence="19" ref="4">
    <original>N</original>
    <variation>T</variation>
    <location>
        <position position="1767"/>
    </location>
</feature>
<feature type="sequence conflict" description="In Ref. 4; BAE30334." evidence="19" ref="4">
    <original>C</original>
    <variation>A</variation>
    <location>
        <position position="1772"/>
    </location>
</feature>
<feature type="sequence conflict" description="In Ref. 4; BAE30334." evidence="19" ref="4">
    <original>I</original>
    <variation>F</variation>
    <location>
        <position position="1773"/>
    </location>
</feature>
<feature type="sequence conflict" description="In Ref. 4; BAE30334/BAE31106/BAE31892/BAE31842/BAE32012." evidence="19" ref="4">
    <original>H</original>
    <variation>N</variation>
    <location>
        <position position="1795"/>
    </location>
</feature>
<accession>Q4JK59</accession>
<accession>Q3U5R5</accession>
<accession>Q3U633</accession>
<accession>Q3UAI0</accession>
<accession>Q6ZPN2</accession>
<accession>Q8K2K3</accession>
<proteinExistence type="evidence at protein level"/>
<gene>
    <name type="primary">Tet2</name>
    <name type="synonym">Kiaa1546</name>
</gene>
<reference key="1">
    <citation type="journal article" date="2006" name="Yi Chuan Xue Bao">
        <title>Cloning and expression analysis of a murine novel gene, Ayu17-449.</title>
        <authorList>
            <person name="Tang H."/>
            <person name="Araki K."/>
            <person name="Yamamura K."/>
        </authorList>
    </citation>
    <scope>NUCLEOTIDE SEQUENCE [MRNA] (ISOFORM 1)</scope>
    <scope>TISSUE SPECIFICITY</scope>
    <source>
        <strain>C57BL/6J</strain>
    </source>
</reference>
<reference key="2">
    <citation type="journal article" date="2003" name="DNA Res.">
        <title>Prediction of the coding sequences of mouse homologues of KIAA gene: III. The complete nucleotide sequences of 500 mouse KIAA-homologous cDNAs identified by screening of terminal sequences of cDNA clones randomly sampled from size-fractionated libraries.</title>
        <authorList>
            <person name="Okazaki N."/>
            <person name="Kikuno R."/>
            <person name="Ohara R."/>
            <person name="Inamoto S."/>
            <person name="Koseki H."/>
            <person name="Hiraoka S."/>
            <person name="Saga Y."/>
            <person name="Nagase T."/>
            <person name="Ohara O."/>
            <person name="Koga H."/>
        </authorList>
    </citation>
    <scope>NUCLEOTIDE SEQUENCE [LARGE SCALE MRNA] (ISOFORM 3)</scope>
    <source>
        <tissue>Brain</tissue>
    </source>
</reference>
<reference key="3">
    <citation type="journal article" date="2004" name="Genome Res.">
        <title>The status, quality, and expansion of the NIH full-length cDNA project: the Mammalian Gene Collection (MGC).</title>
        <authorList>
            <consortium name="The MGC Project Team"/>
        </authorList>
    </citation>
    <scope>NUCLEOTIDE SEQUENCE [LARGE SCALE MRNA] (ISOFORM 2)</scope>
    <source>
        <strain>FVB/N</strain>
        <tissue>Mammary tumor</tissue>
    </source>
</reference>
<reference key="4">
    <citation type="journal article" date="2005" name="Science">
        <title>The transcriptional landscape of the mammalian genome.</title>
        <authorList>
            <person name="Carninci P."/>
            <person name="Kasukawa T."/>
            <person name="Katayama S."/>
            <person name="Gough J."/>
            <person name="Frith M.C."/>
            <person name="Maeda N."/>
            <person name="Oyama R."/>
            <person name="Ravasi T."/>
            <person name="Lenhard B."/>
            <person name="Wells C."/>
            <person name="Kodzius R."/>
            <person name="Shimokawa K."/>
            <person name="Bajic V.B."/>
            <person name="Brenner S.E."/>
            <person name="Batalov S."/>
            <person name="Forrest A.R."/>
            <person name="Zavolan M."/>
            <person name="Davis M.J."/>
            <person name="Wilming L.G."/>
            <person name="Aidinis V."/>
            <person name="Allen J.E."/>
            <person name="Ambesi-Impiombato A."/>
            <person name="Apweiler R."/>
            <person name="Aturaliya R.N."/>
            <person name="Bailey T.L."/>
            <person name="Bansal M."/>
            <person name="Baxter L."/>
            <person name="Beisel K.W."/>
            <person name="Bersano T."/>
            <person name="Bono H."/>
            <person name="Chalk A.M."/>
            <person name="Chiu K.P."/>
            <person name="Choudhary V."/>
            <person name="Christoffels A."/>
            <person name="Clutterbuck D.R."/>
            <person name="Crowe M.L."/>
            <person name="Dalla E."/>
            <person name="Dalrymple B.P."/>
            <person name="de Bono B."/>
            <person name="Della Gatta G."/>
            <person name="di Bernardo D."/>
            <person name="Down T."/>
            <person name="Engstrom P."/>
            <person name="Fagiolini M."/>
            <person name="Faulkner G."/>
            <person name="Fletcher C.F."/>
            <person name="Fukushima T."/>
            <person name="Furuno M."/>
            <person name="Futaki S."/>
            <person name="Gariboldi M."/>
            <person name="Georgii-Hemming P."/>
            <person name="Gingeras T.R."/>
            <person name="Gojobori T."/>
            <person name="Green R.E."/>
            <person name="Gustincich S."/>
            <person name="Harbers M."/>
            <person name="Hayashi Y."/>
            <person name="Hensch T.K."/>
            <person name="Hirokawa N."/>
            <person name="Hill D."/>
            <person name="Huminiecki L."/>
            <person name="Iacono M."/>
            <person name="Ikeo K."/>
            <person name="Iwama A."/>
            <person name="Ishikawa T."/>
            <person name="Jakt M."/>
            <person name="Kanapin A."/>
            <person name="Katoh M."/>
            <person name="Kawasawa Y."/>
            <person name="Kelso J."/>
            <person name="Kitamura H."/>
            <person name="Kitano H."/>
            <person name="Kollias G."/>
            <person name="Krishnan S.P."/>
            <person name="Kruger A."/>
            <person name="Kummerfeld S.K."/>
            <person name="Kurochkin I.V."/>
            <person name="Lareau L.F."/>
            <person name="Lazarevic D."/>
            <person name="Lipovich L."/>
            <person name="Liu J."/>
            <person name="Liuni S."/>
            <person name="McWilliam S."/>
            <person name="Madan Babu M."/>
            <person name="Madera M."/>
            <person name="Marchionni L."/>
            <person name="Matsuda H."/>
            <person name="Matsuzawa S."/>
            <person name="Miki H."/>
            <person name="Mignone F."/>
            <person name="Miyake S."/>
            <person name="Morris K."/>
            <person name="Mottagui-Tabar S."/>
            <person name="Mulder N."/>
            <person name="Nakano N."/>
            <person name="Nakauchi H."/>
            <person name="Ng P."/>
            <person name="Nilsson R."/>
            <person name="Nishiguchi S."/>
            <person name="Nishikawa S."/>
            <person name="Nori F."/>
            <person name="Ohara O."/>
            <person name="Okazaki Y."/>
            <person name="Orlando V."/>
            <person name="Pang K.C."/>
            <person name="Pavan W.J."/>
            <person name="Pavesi G."/>
            <person name="Pesole G."/>
            <person name="Petrovsky N."/>
            <person name="Piazza S."/>
            <person name="Reed J."/>
            <person name="Reid J.F."/>
            <person name="Ring B.Z."/>
            <person name="Ringwald M."/>
            <person name="Rost B."/>
            <person name="Ruan Y."/>
            <person name="Salzberg S.L."/>
            <person name="Sandelin A."/>
            <person name="Schneider C."/>
            <person name="Schoenbach C."/>
            <person name="Sekiguchi K."/>
            <person name="Semple C.A."/>
            <person name="Seno S."/>
            <person name="Sessa L."/>
            <person name="Sheng Y."/>
            <person name="Shibata Y."/>
            <person name="Shimada H."/>
            <person name="Shimada K."/>
            <person name="Silva D."/>
            <person name="Sinclair B."/>
            <person name="Sperling S."/>
            <person name="Stupka E."/>
            <person name="Sugiura K."/>
            <person name="Sultana R."/>
            <person name="Takenaka Y."/>
            <person name="Taki K."/>
            <person name="Tammoja K."/>
            <person name="Tan S.L."/>
            <person name="Tang S."/>
            <person name="Taylor M.S."/>
            <person name="Tegner J."/>
            <person name="Teichmann S.A."/>
            <person name="Ueda H.R."/>
            <person name="van Nimwegen E."/>
            <person name="Verardo R."/>
            <person name="Wei C.L."/>
            <person name="Yagi K."/>
            <person name="Yamanishi H."/>
            <person name="Zabarovsky E."/>
            <person name="Zhu S."/>
            <person name="Zimmer A."/>
            <person name="Hide W."/>
            <person name="Bult C."/>
            <person name="Grimmond S.M."/>
            <person name="Teasdale R.D."/>
            <person name="Liu E.T."/>
            <person name="Brusic V."/>
            <person name="Quackenbush J."/>
            <person name="Wahlestedt C."/>
            <person name="Mattick J.S."/>
            <person name="Hume D.A."/>
            <person name="Kai C."/>
            <person name="Sasaki D."/>
            <person name="Tomaru Y."/>
            <person name="Fukuda S."/>
            <person name="Kanamori-Katayama M."/>
            <person name="Suzuki M."/>
            <person name="Aoki J."/>
            <person name="Arakawa T."/>
            <person name="Iida J."/>
            <person name="Imamura K."/>
            <person name="Itoh M."/>
            <person name="Kato T."/>
            <person name="Kawaji H."/>
            <person name="Kawagashira N."/>
            <person name="Kawashima T."/>
            <person name="Kojima M."/>
            <person name="Kondo S."/>
            <person name="Konno H."/>
            <person name="Nakano K."/>
            <person name="Ninomiya N."/>
            <person name="Nishio T."/>
            <person name="Okada M."/>
            <person name="Plessy C."/>
            <person name="Shibata K."/>
            <person name="Shiraki T."/>
            <person name="Suzuki S."/>
            <person name="Tagami M."/>
            <person name="Waki K."/>
            <person name="Watahiki A."/>
            <person name="Okamura-Oho Y."/>
            <person name="Suzuki H."/>
            <person name="Kawai J."/>
            <person name="Hayashizaki Y."/>
        </authorList>
    </citation>
    <scope>NUCLEOTIDE SEQUENCE [LARGE SCALE MRNA] OF 877-1912 (ISOFORM 2)</scope>
    <source>
        <strain>C57BL/6J</strain>
        <tissue>Bone marrow</tissue>
    </source>
</reference>
<reference key="5">
    <citation type="journal article" date="2010" name="Cell">
        <title>A tissue-specific atlas of mouse protein phosphorylation and expression.</title>
        <authorList>
            <person name="Huttlin E.L."/>
            <person name="Jedrychowski M.P."/>
            <person name="Elias J.E."/>
            <person name="Goswami T."/>
            <person name="Rad R."/>
            <person name="Beausoleil S.A."/>
            <person name="Villen J."/>
            <person name="Haas W."/>
            <person name="Sowa M.E."/>
            <person name="Gygi S.P."/>
        </authorList>
    </citation>
    <scope>PHOSPHORYLATION [LARGE SCALE ANALYSIS] AT SER-15 AND SER-23</scope>
    <scope>IDENTIFICATION BY MASS SPECTROMETRY [LARGE SCALE ANALYSIS]</scope>
    <source>
        <tissue>Brain</tissue>
        <tissue>Kidney</tissue>
        <tissue>Spleen</tissue>
    </source>
</reference>
<reference key="6">
    <citation type="journal article" date="2010" name="Nature">
        <title>Role of Tet proteins in 5mC to 5hmC conversion, ES-cell self-renewal and inner cell mass specification.</title>
        <authorList>
            <person name="Ito S."/>
            <person name="D'Alessio A.C."/>
            <person name="Taranova O.V."/>
            <person name="Hong K."/>
            <person name="Sowers L.C."/>
            <person name="Zhang Y."/>
        </authorList>
    </citation>
    <scope>FUNCTION</scope>
    <scope>CATALYTIC ACTIVITY</scope>
    <scope>TISSUE SPECIFICITY</scope>
    <scope>MUTAGENESIS OF HIS-1295 AND ASP-1297</scope>
</reference>
<reference key="7">
    <citation type="journal article" date="2010" name="Nature">
        <title>Impaired hydroxylation of 5-methylcytosine in myeloid cancers with mutant TET2.</title>
        <authorList>
            <person name="Ko M."/>
            <person name="Huang Y."/>
            <person name="Jankowska A.M."/>
            <person name="Pape U.J."/>
            <person name="Tahiliani M."/>
            <person name="Bandukwala H.S."/>
            <person name="An J."/>
            <person name="Lamperti E.D."/>
            <person name="Koh K.P."/>
            <person name="Ganetzky R."/>
            <person name="Liu X.S."/>
            <person name="Aravind L."/>
            <person name="Agarwal S."/>
            <person name="Maciejewski J.P."/>
            <person name="Rao A."/>
        </authorList>
    </citation>
    <scope>FUNCTION</scope>
    <scope>CATALYTIC ACTIVITY</scope>
    <scope>MUTAGENESIS OF TRP-1204; PRO-1280; HIS-1795; ARG-1810 AND CYS-1827</scope>
</reference>
<reference key="8">
    <citation type="journal article" date="2011" name="Blood">
        <title>Deletion of Tet2 in mice leads to dysregulated hematopoietic stem cells and subsequent development of myeloid malignancies.</title>
        <authorList>
            <person name="Li Z."/>
            <person name="Cai X."/>
            <person name="Cai C.L."/>
            <person name="Wang J."/>
            <person name="Zhang W."/>
            <person name="Petersen B.E."/>
            <person name="Yang F.C."/>
            <person name="Xu M."/>
        </authorList>
    </citation>
    <scope>DISRUPTION PHENOTYPE</scope>
</reference>
<reference key="9">
    <citation type="journal article" date="2011" name="Cancer Cell">
        <title>Tet2 loss leads to increased hematopoietic stem cell self-renewal and myeloid transformation.</title>
        <authorList>
            <person name="Moran-Crusio K."/>
            <person name="Reavie L."/>
            <person name="Shih A."/>
            <person name="Abdel-Wahab O."/>
            <person name="Ndiaye-Lobry D."/>
            <person name="Lobry C."/>
            <person name="Figueroa M.E."/>
            <person name="Vasanthakumar A."/>
            <person name="Patel J."/>
            <person name="Zhao X."/>
            <person name="Perna F."/>
            <person name="Pandey S."/>
            <person name="Madzo J."/>
            <person name="Song C."/>
            <person name="Dai Q."/>
            <person name="He C."/>
            <person name="Ibrahim S."/>
            <person name="Beran M."/>
            <person name="Zavadil J."/>
            <person name="Nimer S.D."/>
            <person name="Melnick A."/>
            <person name="Godley L.A."/>
            <person name="Aifantis I."/>
            <person name="Levine R.L."/>
        </authorList>
    </citation>
    <scope>DISRUPTION PHENOTYPE</scope>
</reference>
<reference key="10">
    <citation type="journal article" date="2012" name="Nature">
        <title>Tet1 controls meiosis by regulating meiotic gene expression.</title>
        <authorList>
            <person name="Yamaguchi S."/>
            <person name="Hong K."/>
            <person name="Liu R."/>
            <person name="Shen L."/>
            <person name="Inoue A."/>
            <person name="Diep D."/>
            <person name="Zhang K."/>
            <person name="Zhang Y."/>
        </authorList>
    </citation>
    <scope>DEVELOPMENTAL STAGE</scope>
</reference>
<reference key="11">
    <citation type="journal article" date="2013" name="Dev. Cell">
        <title>Combined deficiency of tet1 and tet2 causes epigenetic abnormalities but is compatible with postnatal development.</title>
        <authorList>
            <person name="Dawlaty M.M."/>
            <person name="Breiling A."/>
            <person name="Le T."/>
            <person name="Raddatz G."/>
            <person name="Barrasa M.I."/>
            <person name="Cheng A.W."/>
            <person name="Gao Q."/>
            <person name="Powell B.E."/>
            <person name="Li Z."/>
            <person name="Xu M."/>
            <person name="Faull K.F."/>
            <person name="Lyko F."/>
            <person name="Jaenisch R."/>
        </authorList>
    </citation>
    <scope>DISRUPTION PHENOTYPE</scope>
</reference>
<reference key="12">
    <citation type="journal article" date="2011" name="Science">
        <title>Tet proteins can convert 5-methylcytosine to 5-formylcytosine and 5-carboxylcytosine.</title>
        <authorList>
            <person name="Ito S."/>
            <person name="Shen L."/>
            <person name="Dai Q."/>
            <person name="Wu S.C."/>
            <person name="Collins L.B."/>
            <person name="Swenberg J.A."/>
            <person name="He C."/>
            <person name="Zhang Y."/>
        </authorList>
    </citation>
    <scope>FUNCTION</scope>
    <scope>CATALYTIC ACTIVITY</scope>
    <scope>MUTAGENESIS OF HIS-1295 AND ASP-1297</scope>
</reference>
<reference key="13">
    <citation type="journal article" date="2011" name="Science">
        <title>Tet-mediated formation of 5-carboxylcytosine and its excision by TDG in mammalian DNA.</title>
        <authorList>
            <person name="He Y.F."/>
            <person name="Li B.Z."/>
            <person name="Li Z."/>
            <person name="Liu P."/>
            <person name="Wang Y."/>
            <person name="Tang Q."/>
            <person name="Ding J."/>
            <person name="Jia Y."/>
            <person name="Chen Z."/>
            <person name="Li L."/>
            <person name="Sun Y."/>
            <person name="Li X."/>
            <person name="Dai Q."/>
            <person name="Song C.X."/>
            <person name="Zhang K."/>
            <person name="He C."/>
            <person name="Xu G.L."/>
        </authorList>
    </citation>
    <scope>FUNCTION</scope>
    <scope>CATALYTIC ACTIVITY</scope>
    <scope>MUTAGENESIS OF HIS-1295 AND ASP-1297</scope>
</reference>
<reference key="14">
    <citation type="journal article" date="2013" name="EMBO J.">
        <title>TET2 and TET3 regulate GlcNAcylation and H3K4 methylation through OGT and SET1/COMPASS.</title>
        <authorList>
            <person name="Deplus R."/>
            <person name="Delatte B."/>
            <person name="Schwinn M.K."/>
            <person name="Defrance M."/>
            <person name="Mendez J."/>
            <person name="Murphy N."/>
            <person name="Dawson M.A."/>
            <person name="Volkmar M."/>
            <person name="Putmans P."/>
            <person name="Calonne E."/>
            <person name="Shih A.H."/>
            <person name="Levine R.L."/>
            <person name="Bernard O."/>
            <person name="Mercher T."/>
            <person name="Solary E."/>
            <person name="Urh M."/>
            <person name="Daniels D.L."/>
            <person name="Fuks F."/>
        </authorList>
    </citation>
    <scope>FUNCTION</scope>
</reference>
<reference key="15">
    <citation type="journal article" date="2013" name="Mol. Cell">
        <title>Tet proteins connect the O-linked N-acetylglucosamine transferase Ogt to chromatin in embryonic stem cells.</title>
        <authorList>
            <person name="Vella P."/>
            <person name="Scelfo A."/>
            <person name="Jammula S."/>
            <person name="Chiacchiera F."/>
            <person name="Williams K."/>
            <person name="Cuomo A."/>
            <person name="Roberto A."/>
            <person name="Christensen J."/>
            <person name="Bonaldi T."/>
            <person name="Helin K."/>
            <person name="Pasini D."/>
        </authorList>
    </citation>
    <scope>FUNCTION</scope>
    <scope>INTERACTION WITH OGT</scope>
    <scope>GLYCOSYLATION</scope>
</reference>
<reference key="16">
    <citation type="journal article" date="2013" name="Science">
        <title>CRL4 complex regulates mammalian oocyte survival and reprogramming by activation of TET proteins.</title>
        <authorList>
            <person name="Yu C."/>
            <person name="Zhang Y.L."/>
            <person name="Pan W.W."/>
            <person name="Li X.M."/>
            <person name="Wang Z.W."/>
            <person name="Ge Z.J."/>
            <person name="Zhou J.J."/>
            <person name="Cang Y."/>
            <person name="Tong C."/>
            <person name="Sun Q.Y."/>
            <person name="Fan H.Y."/>
        </authorList>
    </citation>
    <scope>TISSUE SPECIFICITY</scope>
    <scope>DEVELOPMENTAL STAGE</scope>
    <scope>MONOUBIQUITINATION AT LYS-1212</scope>
</reference>
<reference key="17">
    <citation type="journal article" date="2015" name="Mol. Cell">
        <title>CRL4(VprBP) E3 ligase promotes monoubiquitylation and chromatin binding of TET dioxygenases.</title>
        <authorList>
            <person name="Nakagawa T."/>
            <person name="Lv L."/>
            <person name="Nakagawa M."/>
            <person name="Yu Y."/>
            <person name="Yu C."/>
            <person name="D'Alessio A.C."/>
            <person name="Nakayama K."/>
            <person name="Fan H.Y."/>
            <person name="Chen X."/>
            <person name="Xiong Y."/>
        </authorList>
    </citation>
    <scope>INTERACTION WITH DCAF1</scope>
    <scope>MONOUBIQUITINATION AT LYS-1212</scope>
    <scope>MUTAGENESIS OF PHE-1200; TRP-1204; SER-1205; CYS-1211; LYS-1212; PHE-1213; ARG-1215; GLU-1231; HIS-1295 AND ASP-1297</scope>
</reference>
<comment type="function">
    <text evidence="4 5 7 9 11 13">Dioxygenase that catalyzes the conversion of the modified genomic base 5-methylcytosine (5mC) into 5-hydroxymethylcytosine (5hmC) and plays a key role in active DNA demethylation. Has a preference for 5-hydroxymethylcytosine in CpG motifs. Also mediates subsequent conversion of 5hmC into 5-formylcytosine (5fC), and conversion of 5fC to 5-carboxylcytosine (5caC). Conversion of 5mC into 5hmC, 5fC and 5caC probably constitutes the first step in cytosine demethylation. Methylation at the C5 position of cytosine bases is an epigenetic modification of the mammalian genome which plays an important role in transcriptional regulation. In addition to its role in DNA demethylation, also involved in the recruitment of the O-GlcNAc transferase OGT to CpG-rich transcription start sites of active genes, thereby promoting histone H2B GlcNAcylation by OGT.</text>
</comment>
<comment type="catalytic activity">
    <reaction evidence="4 5 7 9">
        <text>a 5-methyl-2'-deoxycytidine in DNA + 2-oxoglutarate + O2 = a 5-hydroxymethyl-2'-deoxycytidine in DNA + succinate + CO2</text>
        <dbReference type="Rhea" id="RHEA:52636"/>
        <dbReference type="Rhea" id="RHEA-COMP:11370"/>
        <dbReference type="Rhea" id="RHEA-COMP:13315"/>
        <dbReference type="ChEBI" id="CHEBI:15379"/>
        <dbReference type="ChEBI" id="CHEBI:16526"/>
        <dbReference type="ChEBI" id="CHEBI:16810"/>
        <dbReference type="ChEBI" id="CHEBI:30031"/>
        <dbReference type="ChEBI" id="CHEBI:85454"/>
        <dbReference type="ChEBI" id="CHEBI:136731"/>
        <dbReference type="EC" id="1.14.11.80"/>
    </reaction>
    <physiologicalReaction direction="left-to-right" evidence="1">
        <dbReference type="Rhea" id="RHEA:52637"/>
    </physiologicalReaction>
</comment>
<comment type="catalytic activity">
    <reaction evidence="7 9">
        <text>a 5-hydroxymethyl-2'-deoxycytidine in DNA + 2-oxoglutarate + O2 = a 5-formyl-2'-deoxycytidine in DNA + succinate + CO2 + H2O</text>
        <dbReference type="Rhea" id="RHEA:53828"/>
        <dbReference type="Rhea" id="RHEA-COMP:13315"/>
        <dbReference type="Rhea" id="RHEA-COMP:13656"/>
        <dbReference type="ChEBI" id="CHEBI:15377"/>
        <dbReference type="ChEBI" id="CHEBI:15379"/>
        <dbReference type="ChEBI" id="CHEBI:16526"/>
        <dbReference type="ChEBI" id="CHEBI:16810"/>
        <dbReference type="ChEBI" id="CHEBI:30031"/>
        <dbReference type="ChEBI" id="CHEBI:136731"/>
        <dbReference type="ChEBI" id="CHEBI:137731"/>
        <dbReference type="EC" id="1.14.11.80"/>
    </reaction>
</comment>
<comment type="catalytic activity">
    <reaction evidence="7 9">
        <text>a 5-formyl-2'-deoxycytidine in DNA + 2-oxoglutarate + O2 = a 5-carboxyl-2'-deoxycytidine in DNA + succinate + CO2 + H(+)</text>
        <dbReference type="Rhea" id="RHEA:53832"/>
        <dbReference type="Rhea" id="RHEA-COMP:13656"/>
        <dbReference type="Rhea" id="RHEA-COMP:13657"/>
        <dbReference type="ChEBI" id="CHEBI:15378"/>
        <dbReference type="ChEBI" id="CHEBI:15379"/>
        <dbReference type="ChEBI" id="CHEBI:16526"/>
        <dbReference type="ChEBI" id="CHEBI:16810"/>
        <dbReference type="ChEBI" id="CHEBI:30031"/>
        <dbReference type="ChEBI" id="CHEBI:137731"/>
        <dbReference type="ChEBI" id="CHEBI:137732"/>
        <dbReference type="EC" id="1.14.11.80"/>
    </reaction>
</comment>
<comment type="cofactor">
    <cofactor evidence="1">
        <name>Fe(2+)</name>
        <dbReference type="ChEBI" id="CHEBI:29033"/>
    </cofactor>
    <text evidence="1">Binds 1 Fe(2+) ion per subunit.</text>
</comment>
<comment type="cofactor">
    <cofactor evidence="1">
        <name>Zn(2+)</name>
        <dbReference type="ChEBI" id="CHEBI:29105"/>
    </cofactor>
    <text evidence="1">Binds 3 zinc ions per subunit. The zinc ions have a structural role.</text>
</comment>
<comment type="subunit">
    <text evidence="1">Interacts with HCFC1 (By similarity). Interacts with OGT (PubMed:23352454). Interacts with PROSER1; this interaction mediates TET2 O-GlcNAcylation and stability by promoting the interaction between OGT and TET2 (By similarity). Directly interacts (via C-terminus) with the DCAF1 component of the CRL4(VprBP) E3 ubiquitin-protein ligase complex (By similarity).</text>
</comment>
<comment type="interaction">
    <interactant intactId="EBI-4291768">
        <id>Q4JK59</id>
    </interactant>
    <interactant intactId="EBI-928496">
        <id>Q8CGY8</id>
        <label>Ogt</label>
    </interactant>
    <organismsDiffer>false</organismsDiffer>
    <experiments>2</experiments>
</comment>
<comment type="interaction">
    <interactant intactId="EBI-4291768">
        <id>Q4JK59</id>
    </interactant>
    <interactant intactId="EBI-8327829">
        <id>P22561</id>
        <label>Wt1</label>
    </interactant>
    <organismsDiffer>false</organismsDiffer>
    <experiments>2</experiments>
</comment>
<comment type="subcellular location">
    <subcellularLocation>
        <location evidence="1">Nucleus</location>
    </subcellularLocation>
    <subcellularLocation>
        <location evidence="1">Chromosome</location>
    </subcellularLocation>
    <text evidence="1">Localization to chromatin depends upon monoubiquitination at Lys-1212.</text>
</comment>
<comment type="alternative products">
    <event type="alternative splicing"/>
    <isoform>
        <id>Q4JK59-1</id>
        <name>1</name>
        <sequence type="displayed"/>
    </isoform>
    <isoform>
        <id>Q4JK59-2</id>
        <name>2</name>
        <sequence type="described" ref="VSP_032287"/>
    </isoform>
    <isoform>
        <id>Q4JK59-3</id>
        <name>3</name>
        <sequence type="described" ref="VSP_032286"/>
    </isoform>
</comment>
<comment type="tissue specificity">
    <text evidence="3 4 14">Expressed in the brain, kidney, heart, lung, muscle and stomach (PubMed:16722336, PubMed:24357321). Expressed in germinal vesicle (GV) stage and MII-stage oocytes and in early embryos (PubMed:24357321). Present in embryonic stem cells (ES cells) (PubMed:20639862).</text>
</comment>
<comment type="developmental stage">
    <text evidence="10 14">Expressed at high levels in early embryos from 1-cell stage until at least blastula (PubMed:24357321). Expressed during embryonic development in both somatic and primordial germ cells from 9.5 dpc, with a peak in primordial germ cells at 16.5 dpc (PubMed:23151479).</text>
</comment>
<comment type="PTM">
    <text evidence="11">May be glycosylated. It is unclear whether interaction with OGT leads to GlcNAcylation. According to a report, it is GlcNAcylated by OGT (PubMed:23352454). In contrast, another group reports no GlcNAcylation by OGT in human ortholog.</text>
</comment>
<comment type="PTM">
    <text evidence="15">Monoubiquitinated at Lys-1212 by the DCX (DDB1-CUL4-X-box) E3 ubiquitin-protein ligase complex called CRL4(VprBP) or CUL4A-RBX1-DDB1-DCAF1/VPRBP complex; this modification promotes binding to DNA.</text>
</comment>
<comment type="PTM">
    <text evidence="1">Acetylated.</text>
</comment>
<comment type="disruption phenotype">
    <text evidence="6 8 12">Mice are viable and fertile but develop chronic myelomonocytic leukemia probably caused by dysregulation of hematopoietic stem cells. Mice lacking both Tet1 and Tet2 are fertile, with females having smaller ovaries and reduced fertility. They display decreased 5-hydroxymethylcytosine (5hmC) and abnormal methylation at various imprinted loci. Embryonic stem cells lacking both Tet1 and Tet2 remain pluripotent but lack 5hmC, leading to developmental defects in chimeric embryos.</text>
</comment>
<comment type="similarity">
    <text evidence="19">Belongs to the TET family.</text>
</comment>
<comment type="caution">
    <text evidence="20">Subsequent steps in cytosine demethylation are subject to discussion. According to a first model cytosine demethylation occurs through deamination of 5hmC into 5-hydroxymethyluracil (5hmU) and subsequent replacement by unmethylated cytosine by the base excision repair system. According to another model, cytosine demethylation is rather mediated via conversion of 5hmC into 5fC and 5caC, followed by excision by TDG (PubMed:21817016).</text>
</comment>
<comment type="sequence caution" evidence="19">
    <conflict type="frameshift">
        <sequence resource="EMBL-CDS" id="AAY90126"/>
    </conflict>
</comment>
<comment type="sequence caution" evidence="19">
    <conflict type="erroneous initiation">
        <sequence resource="EMBL-CDS" id="BAC98199"/>
    </conflict>
    <text>Extended N-terminus.</text>
</comment>
<comment type="sequence caution" evidence="19">
    <conflict type="erroneous initiation">
        <sequence resource="EMBL-CDS" id="BAE30334"/>
    </conflict>
    <text>Truncated N-terminus.</text>
</comment>
<comment type="sequence caution" evidence="19">
    <conflict type="frameshift">
        <sequence resource="EMBL-CDS" id="BAE30334"/>
    </conflict>
</comment>
<comment type="sequence caution" evidence="19">
    <conflict type="erroneous initiation">
        <sequence resource="EMBL-CDS" id="BAE31106"/>
    </conflict>
    <text>Truncated N-terminus.</text>
</comment>
<comment type="sequence caution" evidence="19">
    <conflict type="erroneous initiation">
        <sequence resource="EMBL-CDS" id="BAE31842"/>
    </conflict>
    <text>Truncated N-terminus.</text>
</comment>
<comment type="sequence caution" evidence="19">
    <conflict type="erroneous initiation">
        <sequence resource="EMBL-CDS" id="BAE31892"/>
    </conflict>
    <text>Truncated N-terminus.</text>
</comment>
<comment type="sequence caution" evidence="19">
    <conflict type="erroneous initiation">
        <sequence resource="EMBL-CDS" id="BAE32012"/>
    </conflict>
    <text>Truncated N-terminus.</text>
</comment>
<name>TET2_MOUSE</name>
<keyword id="KW-0007">Acetylation</keyword>
<keyword id="KW-0025">Alternative splicing</keyword>
<keyword id="KW-0131">Cell cycle</keyword>
<keyword id="KW-0156">Chromatin regulator</keyword>
<keyword id="KW-0158">Chromosome</keyword>
<keyword id="KW-0223">Dioxygenase</keyword>
<keyword id="KW-0238">DNA-binding</keyword>
<keyword id="KW-0325">Glycoprotein</keyword>
<keyword id="KW-0408">Iron</keyword>
<keyword id="KW-1017">Isopeptide bond</keyword>
<keyword id="KW-0479">Metal-binding</keyword>
<keyword id="KW-0539">Nucleus</keyword>
<keyword id="KW-0560">Oxidoreductase</keyword>
<keyword id="KW-0597">Phosphoprotein</keyword>
<keyword id="KW-1185">Reference proteome</keyword>
<keyword id="KW-0832">Ubl conjugation</keyword>
<keyword id="KW-0862">Zinc</keyword>
<organism>
    <name type="scientific">Mus musculus</name>
    <name type="common">Mouse</name>
    <dbReference type="NCBI Taxonomy" id="10090"/>
    <lineage>
        <taxon>Eukaryota</taxon>
        <taxon>Metazoa</taxon>
        <taxon>Chordata</taxon>
        <taxon>Craniata</taxon>
        <taxon>Vertebrata</taxon>
        <taxon>Euteleostomi</taxon>
        <taxon>Mammalia</taxon>
        <taxon>Eutheria</taxon>
        <taxon>Euarchontoglires</taxon>
        <taxon>Glires</taxon>
        <taxon>Rodentia</taxon>
        <taxon>Myomorpha</taxon>
        <taxon>Muroidea</taxon>
        <taxon>Muridae</taxon>
        <taxon>Murinae</taxon>
        <taxon>Mus</taxon>
        <taxon>Mus</taxon>
    </lineage>
</organism>
<evidence type="ECO:0000250" key="1">
    <source>
        <dbReference type="UniProtKB" id="Q6N021"/>
    </source>
</evidence>
<evidence type="ECO:0000256" key="2">
    <source>
        <dbReference type="SAM" id="MobiDB-lite"/>
    </source>
</evidence>
<evidence type="ECO:0000269" key="3">
    <source>
    </source>
</evidence>
<evidence type="ECO:0000269" key="4">
    <source>
    </source>
</evidence>
<evidence type="ECO:0000269" key="5">
    <source>
    </source>
</evidence>
<evidence type="ECO:0000269" key="6">
    <source>
    </source>
</evidence>
<evidence type="ECO:0000269" key="7">
    <source>
    </source>
</evidence>
<evidence type="ECO:0000269" key="8">
    <source>
    </source>
</evidence>
<evidence type="ECO:0000269" key="9">
    <source>
    </source>
</evidence>
<evidence type="ECO:0000269" key="10">
    <source>
    </source>
</evidence>
<evidence type="ECO:0000269" key="11">
    <source>
    </source>
</evidence>
<evidence type="ECO:0000269" key="12">
    <source>
    </source>
</evidence>
<evidence type="ECO:0000269" key="13">
    <source>
    </source>
</evidence>
<evidence type="ECO:0000269" key="14">
    <source>
    </source>
</evidence>
<evidence type="ECO:0000269" key="15">
    <source>
    </source>
</evidence>
<evidence type="ECO:0000303" key="16">
    <source>
    </source>
</evidence>
<evidence type="ECO:0000303" key="17">
    <source>
    </source>
</evidence>
<evidence type="ECO:0000303" key="18">
    <source>
    </source>
</evidence>
<evidence type="ECO:0000305" key="19"/>
<evidence type="ECO:0000305" key="20">
    <source>
    </source>
</evidence>
<evidence type="ECO:0007744" key="21">
    <source>
    </source>
</evidence>
<protein>
    <recommendedName>
        <fullName>Methylcytosine dioxygenase TET2</fullName>
        <ecNumber evidence="4 5 7 9">1.14.11.80</ecNumber>
    </recommendedName>
    <alternativeName>
        <fullName>Protein Ayu17-449</fullName>
    </alternativeName>
</protein>
<sequence>MEQDRTTHAEGTRLSPFLIAPPSPISHTEPLAVKLQNGSPLAERPHPEVNGDTKWQSSQSCYGISHMKGSQSSHESPHEDRGYSRCLQNGGIKRTVSEPSLSGLHPNKILKLDQKAKGESNIFEESQERNHGKSSRQPNVSGLSDNGEPVTSTTQESSGADAFPTRNYNGVEIQVLNEQEGEKGRSVTLLKNKIVLMPNGATVSAHSEENTRGELLEKTQCYPDCVSIAVQSTASHVNTPSSQAAIELSHEIPQPSLTSAQINFSQTSSLQLPPEPAAMVTKACDADNASKPAIVPGTCPFQKAEHQQKSALDIGPSRAENKTIQGSMELFAEEYYPSSDRNLQASHGSSEQYSKQKETNGAYFRQSSKFPKDSISPTTVTPPSQSLLAPRLVLQPPLEGKGALNDVALEEHHDYPNRSNRTLLREGKIDHQPKTSSSQSLNPSVHTPNPPLMLPEQHQNDCGSPSPEKSRKMSEYLMYYLPNHGHSGGLQEHSQYLMGHREQEIPKDANGKQTQGSVQAAPGWIELKAPNLHEALHQTKRKDISLHSVLHSQTGPVNQMSSKQSTGNVNMPGGFQRLPYLQKTAQPEQKAQMYQVQVNQGPSPGMGDQHLQFQKALYQECIPRTDPSSEAHPQAPSVPQYHFQQRVNPSSDKHLSQQATETQRLSGFLQHTPQTQASQTPASQNSNFPQICQQQQQQQLQRKNKEQMPQTFSHLQGSNDKQREGSCFGQIKVEESFCVGNQYSKSSNFQTHNNTQGGLEQVQNINKNFPYSKILTPNSSNLQILPSNDTHPACEREQALHPVGSKTSNLQNMQYFPNNVTPNQDVHRCFQEQAQKPQQASSLQGLKDRSQGESPAPPAEAAQQRYLVHNEAKALPVPEQGGSQTQTPPQKDTQKHAALRWLLLQKQEQQQTQQSQPGHNQMLRPIKTEPVSKPSSYRYPLSPPQENMSSRIKQEISSPSRDNGQPKSIIETMEQHLKQFQLKSLCDYKALTLKSQKHVKVPTDIQAAESENHARAAEPQATKSTDCSVLDDVSESDTPGEQSQNGKCEGCNPDKDEAPYYTHLGAGPDVAAIRTLMEERYGEKGKAIRIEKVIYTGKEGKSSQGCPIAKWVYRRSSEEEKLLCLVRVRPNHTCETAVMVIAIMLWDGIPKLLASELYSELTDILGKCGICTNRRCSQNETRNCCCQGENPETCGASFSFGCSWSMYYNGCKFARSKKPRKFRLHGAEPKEEERLGSHLQNLATVIAPIYKKLAPDAYNNQVEFEHQAPDCCLGLKEGRPFSGVTACLDFSAHSHRDQQNMPNGSTVVVTLNREDNREVGAKPEDEQFHVLPMYIIAPEDEFGSTEGQEKKIRMGSIEVLQSFRRRRVIRIGELPKSCKKKAEPKKAKTKKAARKRSSLENCSSRTEKGKSSSHTKLMENASHMKQMTAQPQLSGPVIRQPPTLQRHLQQGQRPQQPQPPQPQPQTTPQPQPQPQHIMPGNSQSVGSHCSGSTSVYTRQPTPHSPYPSSAHTSDIYGDTNHVNFYPTSSHASGSYLNPSNYMNPYLGLLNQNNQYAPFPYNGSVPVDNGSPFLGSYSPQAQSRDLHRYPNQDHLTNQNLPPIHTLHQQTFGDSPSKYLSYGNQNMQRDAFTTNSTLKPNVHHLATFSPYPTPKMDSHFMGAASRSPYSHPHTDYKTSEHHLPSHTIYSYTAAASGSSSSHAFHNKENDNIANGLSRVLPGFNHDRTASAQELLYSLTGSSQEKQPEVSGQDAAAVQEIEYWSDSEHNFQDPCIGGVAIAPTHGSILIECAKCEVHATTKVNDPDRNHPTRISLVLYRHKNLFLPKHCLALWEAKMAEKARKEEECGKNGSDHVSQKNHGKQEKREPTGPQEPSYLRFIQSLAENTGSVTTDSTVTTSPYAFTQVTGPYNTFV</sequence>
<dbReference type="EC" id="1.14.11.80" evidence="4 5 7 9"/>
<dbReference type="EMBL" id="DQ079067">
    <property type="protein sequence ID" value="AAY90126.1"/>
    <property type="status" value="ALT_FRAME"/>
    <property type="molecule type" value="mRNA"/>
</dbReference>
<dbReference type="EMBL" id="AK129389">
    <property type="protein sequence ID" value="BAC98199.1"/>
    <property type="status" value="ALT_INIT"/>
    <property type="molecule type" value="mRNA"/>
</dbReference>
<dbReference type="EMBL" id="BC031159">
    <property type="protein sequence ID" value="AAH31159.1"/>
    <property type="molecule type" value="mRNA"/>
</dbReference>
<dbReference type="EMBL" id="BC040785">
    <property type="protein sequence ID" value="AAH40785.1"/>
    <property type="molecule type" value="mRNA"/>
</dbReference>
<dbReference type="EMBL" id="AK151359">
    <property type="protein sequence ID" value="BAE30334.1"/>
    <property type="status" value="ALT_SEQ"/>
    <property type="molecule type" value="mRNA"/>
</dbReference>
<dbReference type="EMBL" id="AK152297">
    <property type="protein sequence ID" value="BAE31106.1"/>
    <property type="status" value="ALT_INIT"/>
    <property type="molecule type" value="mRNA"/>
</dbReference>
<dbReference type="EMBL" id="AK153251">
    <property type="protein sequence ID" value="BAE31842.1"/>
    <property type="status" value="ALT_INIT"/>
    <property type="molecule type" value="mRNA"/>
</dbReference>
<dbReference type="EMBL" id="AK153311">
    <property type="protein sequence ID" value="BAE31892.1"/>
    <property type="status" value="ALT_INIT"/>
    <property type="molecule type" value="mRNA"/>
</dbReference>
<dbReference type="EMBL" id="AK153460">
    <property type="protein sequence ID" value="BAE32012.1"/>
    <property type="status" value="ALT_INIT"/>
    <property type="molecule type" value="mRNA"/>
</dbReference>
<dbReference type="CCDS" id="CCDS51071.1">
    <molecule id="Q4JK59-1"/>
</dbReference>
<dbReference type="RefSeq" id="NP_001035490.2">
    <molecule id="Q4JK59-1"/>
    <property type="nucleotide sequence ID" value="NM_001040400.2"/>
</dbReference>
<dbReference type="RefSeq" id="NP_001333665.1">
    <property type="nucleotide sequence ID" value="NM_001346736.1"/>
</dbReference>
<dbReference type="SMR" id="Q4JK59"/>
<dbReference type="BioGRID" id="229496">
    <property type="interactions" value="15"/>
</dbReference>
<dbReference type="FunCoup" id="Q4JK59">
    <property type="interactions" value="2730"/>
</dbReference>
<dbReference type="IntAct" id="Q4JK59">
    <property type="interactions" value="4"/>
</dbReference>
<dbReference type="MINT" id="Q4JK59"/>
<dbReference type="STRING" id="10090.ENSMUSP00000143029"/>
<dbReference type="BindingDB" id="Q4JK59"/>
<dbReference type="ChEMBL" id="CHEMBL5465314"/>
<dbReference type="GlyGen" id="Q4JK59">
    <property type="glycosylation" value="69 sites, 1 O-linked glycan (69 sites)"/>
</dbReference>
<dbReference type="iPTMnet" id="Q4JK59"/>
<dbReference type="PhosphoSitePlus" id="Q4JK59"/>
<dbReference type="SwissPalm" id="Q4JK59"/>
<dbReference type="PaxDb" id="10090-ENSMUSP00000096203"/>
<dbReference type="PeptideAtlas" id="Q4JK59"/>
<dbReference type="ProteomicsDB" id="262757">
    <molecule id="Q4JK59-1"/>
</dbReference>
<dbReference type="ProteomicsDB" id="262758">
    <molecule id="Q4JK59-2"/>
</dbReference>
<dbReference type="ProteomicsDB" id="262759">
    <molecule id="Q4JK59-3"/>
</dbReference>
<dbReference type="Antibodypedia" id="45118">
    <property type="antibodies" value="451 antibodies from 37 providers"/>
</dbReference>
<dbReference type="Ensembl" id="ENSMUST00000098603.8">
    <molecule id="Q4JK59-1"/>
    <property type="protein sequence ID" value="ENSMUSP00000096203.4"/>
    <property type="gene ID" value="ENSMUSG00000040943.13"/>
</dbReference>
<dbReference type="GeneID" id="214133"/>
<dbReference type="KEGG" id="mmu:214133"/>
<dbReference type="UCSC" id="uc008rko.2">
    <molecule id="Q4JK59-2"/>
    <property type="organism name" value="mouse"/>
</dbReference>
<dbReference type="UCSC" id="uc008rkp.2">
    <molecule id="Q4JK59-3"/>
    <property type="organism name" value="mouse"/>
</dbReference>
<dbReference type="UCSC" id="uc008rkq.2">
    <molecule id="Q4JK59-1"/>
    <property type="organism name" value="mouse"/>
</dbReference>
<dbReference type="AGR" id="MGI:2443298"/>
<dbReference type="CTD" id="54790"/>
<dbReference type="MGI" id="MGI:2443298">
    <property type="gene designation" value="Tet2"/>
</dbReference>
<dbReference type="VEuPathDB" id="HostDB:ENSMUSG00000040943"/>
<dbReference type="eggNOG" id="ENOG502QURD">
    <property type="taxonomic scope" value="Eukaryota"/>
</dbReference>
<dbReference type="GeneTree" id="ENSGT00940000160003"/>
<dbReference type="HOGENOM" id="CLU_002537_0_0_1"/>
<dbReference type="InParanoid" id="Q4JK59"/>
<dbReference type="OrthoDB" id="8854879at2759"/>
<dbReference type="PhylomeDB" id="Q4JK59"/>
<dbReference type="TreeFam" id="TF337563"/>
<dbReference type="BioGRID-ORCS" id="214133">
    <property type="hits" value="2 hits in 48 CRISPR screens"/>
</dbReference>
<dbReference type="ChiTaRS" id="Tet2">
    <property type="organism name" value="mouse"/>
</dbReference>
<dbReference type="PRO" id="PR:Q4JK59"/>
<dbReference type="Proteomes" id="UP000000589">
    <property type="component" value="Chromosome 3"/>
</dbReference>
<dbReference type="RNAct" id="Q4JK59">
    <property type="molecule type" value="protein"/>
</dbReference>
<dbReference type="Bgee" id="ENSMUSG00000040943">
    <property type="expression patterns" value="Expressed in urethra and 247 other cell types or tissues"/>
</dbReference>
<dbReference type="ExpressionAtlas" id="Q4JK59">
    <property type="expression patterns" value="baseline and differential"/>
</dbReference>
<dbReference type="GO" id="GO:0005694">
    <property type="term" value="C:chromosome"/>
    <property type="evidence" value="ECO:0007669"/>
    <property type="project" value="UniProtKB-SubCell"/>
</dbReference>
<dbReference type="GO" id="GO:0005654">
    <property type="term" value="C:nucleoplasm"/>
    <property type="evidence" value="ECO:0000304"/>
    <property type="project" value="Reactome"/>
</dbReference>
<dbReference type="GO" id="GO:0070579">
    <property type="term" value="F:5-methylcytosine dioxygenase activity"/>
    <property type="evidence" value="ECO:0000314"/>
    <property type="project" value="UniProtKB"/>
</dbReference>
<dbReference type="GO" id="GO:0003677">
    <property type="term" value="F:DNA binding"/>
    <property type="evidence" value="ECO:0007669"/>
    <property type="project" value="UniProtKB-KW"/>
</dbReference>
<dbReference type="GO" id="GO:0008198">
    <property type="term" value="F:ferrous iron binding"/>
    <property type="evidence" value="ECO:0000250"/>
    <property type="project" value="UniProtKB"/>
</dbReference>
<dbReference type="GO" id="GO:0008270">
    <property type="term" value="F:zinc ion binding"/>
    <property type="evidence" value="ECO:0000250"/>
    <property type="project" value="UniProtKB"/>
</dbReference>
<dbReference type="GO" id="GO:0141167">
    <property type="term" value="P:chromosomal 5-methylcytosine DNA demethylation, oxidation pathway"/>
    <property type="evidence" value="ECO:0000315"/>
    <property type="project" value="MGI"/>
</dbReference>
<dbReference type="GO" id="GO:0019858">
    <property type="term" value="P:cytosine metabolic process"/>
    <property type="evidence" value="ECO:0000315"/>
    <property type="project" value="MGI"/>
</dbReference>
<dbReference type="GO" id="GO:0061484">
    <property type="term" value="P:hematopoietic stem cell homeostasis"/>
    <property type="evidence" value="ECO:0000315"/>
    <property type="project" value="MGI"/>
</dbReference>
<dbReference type="GO" id="GO:0020027">
    <property type="term" value="P:hemoglobin metabolic process"/>
    <property type="evidence" value="ECO:0000315"/>
    <property type="project" value="MGI"/>
</dbReference>
<dbReference type="GO" id="GO:0030097">
    <property type="term" value="P:hemopoiesis"/>
    <property type="evidence" value="ECO:0000315"/>
    <property type="project" value="MGI"/>
</dbReference>
<dbReference type="GO" id="GO:0048872">
    <property type="term" value="P:homeostasis of number of cells"/>
    <property type="evidence" value="ECO:0000315"/>
    <property type="project" value="MGI"/>
</dbReference>
<dbReference type="GO" id="GO:0001822">
    <property type="term" value="P:kidney development"/>
    <property type="evidence" value="ECO:0000315"/>
    <property type="project" value="MGI"/>
</dbReference>
<dbReference type="GO" id="GO:0002521">
    <property type="term" value="P:leukocyte differentiation"/>
    <property type="evidence" value="ECO:0000250"/>
    <property type="project" value="UniProtKB"/>
</dbReference>
<dbReference type="GO" id="GO:0072576">
    <property type="term" value="P:liver morphogenesis"/>
    <property type="evidence" value="ECO:0000315"/>
    <property type="project" value="MGI"/>
</dbReference>
<dbReference type="GO" id="GO:0030099">
    <property type="term" value="P:myeloid cell differentiation"/>
    <property type="evidence" value="ECO:0000315"/>
    <property type="project" value="UniProtKB"/>
</dbReference>
<dbReference type="GO" id="GO:0002318">
    <property type="term" value="P:myeloid progenitor cell differentiation"/>
    <property type="evidence" value="ECO:0000315"/>
    <property type="project" value="MGI"/>
</dbReference>
<dbReference type="GO" id="GO:0044029">
    <property type="term" value="P:positive regulation of gene expression via chromosomal CpG island demethylation"/>
    <property type="evidence" value="ECO:0000314"/>
    <property type="project" value="MGI"/>
</dbReference>
<dbReference type="GO" id="GO:0045944">
    <property type="term" value="P:positive regulation of transcription by RNA polymerase II"/>
    <property type="evidence" value="ECO:0000315"/>
    <property type="project" value="UniProtKB"/>
</dbReference>
<dbReference type="GO" id="GO:0009791">
    <property type="term" value="P:post-embryonic development"/>
    <property type="evidence" value="ECO:0000315"/>
    <property type="project" value="MGI"/>
</dbReference>
<dbReference type="GO" id="GO:0006493">
    <property type="term" value="P:protein O-linked glycosylation"/>
    <property type="evidence" value="ECO:0000315"/>
    <property type="project" value="UniProtKB"/>
</dbReference>
<dbReference type="GO" id="GO:0048536">
    <property type="term" value="P:spleen development"/>
    <property type="evidence" value="ECO:0000315"/>
    <property type="project" value="MGI"/>
</dbReference>
<dbReference type="InterPro" id="IPR024779">
    <property type="entry name" value="2OGFeDO_JBP1/TET_oxygenase_dom"/>
</dbReference>
<dbReference type="InterPro" id="IPR040175">
    <property type="entry name" value="TET1/2/3"/>
</dbReference>
<dbReference type="InterPro" id="IPR046942">
    <property type="entry name" value="TET_oxygenase"/>
</dbReference>
<dbReference type="PANTHER" id="PTHR23358">
    <property type="entry name" value="METHYLCYTOSINE DIOXYGENASE TET"/>
    <property type="match status" value="1"/>
</dbReference>
<dbReference type="PANTHER" id="PTHR23358:SF3">
    <property type="entry name" value="METHYLCYTOSINE DIOXYGENASE TET2"/>
    <property type="match status" value="1"/>
</dbReference>
<dbReference type="Pfam" id="PF12851">
    <property type="entry name" value="Tet_JBP"/>
    <property type="match status" value="1"/>
</dbReference>
<dbReference type="SMART" id="SM01333">
    <property type="entry name" value="Tet_JBP"/>
    <property type="match status" value="1"/>
</dbReference>